<evidence type="ECO:0000250" key="1"/>
<evidence type="ECO:0000256" key="2">
    <source>
        <dbReference type="SAM" id="MobiDB-lite"/>
    </source>
</evidence>
<evidence type="ECO:0000305" key="3"/>
<sequence length="591" mass="65545">MAEELKAKGNAAFSKKDYKTAIDYFTQAIGLDERNHILYSNRSACYASEKDYADALKDATKCTELKPDWAKGWSRKGAALHGLGDLDAARSAYEEGLKHDANNAQLLNGLKSVEAAQTQAASGAGGFNPFAKLGSQLSDPKFMEKLASNPETASLLADSAFMAKLQKIQQNPGSIMAELNDPRMMKVIGMLMGIDINMNAGEGAAEEQEKKEEFAPSSSTPSADSAKPETTNPPPQPQASEPMEEDKTAEELEEAATKEALKKKADQEKQIGNENYKKRNFPVAIEQYKKAWDTYKDITYLNNLAAAYFEADQLDDCIKTCEDAIEQGRELRADFKLIAKALGRLGTTYQKRGDLVKAIDYYQRSLTEHRTPDILSRLKDAEKSKELQDREAYIDPDKAEESRVKGNELFKSGDFANAIKEYTEMTKRAPSDPRGFGNRAAAYLKVMAPAECIRDCNKAIELDPNFAKAYVRKAQALFMLKDYNKCIDACNEASEVDRREPNTGKNLREIESQLSKCMSAMASQRQNETEEETMARIQKDPEVLGILQDPAMQAILGQARENPAALMEHMKNPTVKSKIEKLIASGVIRLG</sequence>
<protein>
    <recommendedName>
        <fullName>Heat shock protein sti1 homolog</fullName>
    </recommendedName>
</protein>
<proteinExistence type="inferred from homology"/>
<gene>
    <name type="primary">sti1</name>
    <name type="synonym">stil</name>
    <name type="ORF">SPCC645.14c</name>
</gene>
<keyword id="KW-0963">Cytoplasm</keyword>
<keyword id="KW-1185">Reference proteome</keyword>
<keyword id="KW-0677">Repeat</keyword>
<keyword id="KW-0346">Stress response</keyword>
<keyword id="KW-0802">TPR repeat</keyword>
<dbReference type="EMBL" id="D85197">
    <property type="protein sequence ID" value="BAA22619.1"/>
    <property type="molecule type" value="Genomic_DNA"/>
</dbReference>
<dbReference type="EMBL" id="CU329672">
    <property type="protein sequence ID" value="CAB39910.1"/>
    <property type="molecule type" value="Genomic_DNA"/>
</dbReference>
<dbReference type="PIR" id="T41531">
    <property type="entry name" value="T41531"/>
</dbReference>
<dbReference type="PIR" id="T51996">
    <property type="entry name" value="T51996"/>
</dbReference>
<dbReference type="RefSeq" id="NP_588123.1">
    <property type="nucleotide sequence ID" value="NM_001023113.2"/>
</dbReference>
<dbReference type="SMR" id="Q9USI5"/>
<dbReference type="BioGRID" id="276037">
    <property type="interactions" value="6"/>
</dbReference>
<dbReference type="FunCoup" id="Q9USI5">
    <property type="interactions" value="631"/>
</dbReference>
<dbReference type="STRING" id="284812.Q9USI5"/>
<dbReference type="iPTMnet" id="Q9USI5"/>
<dbReference type="SwissPalm" id="Q9USI5"/>
<dbReference type="PaxDb" id="4896-SPCC645.14c.1"/>
<dbReference type="EnsemblFungi" id="SPCC645.14c.1">
    <property type="protein sequence ID" value="SPCC645.14c.1:pep"/>
    <property type="gene ID" value="SPCC645.14c"/>
</dbReference>
<dbReference type="GeneID" id="2539474"/>
<dbReference type="KEGG" id="spo:2539474"/>
<dbReference type="PomBase" id="SPCC645.14c">
    <property type="gene designation" value="sti1"/>
</dbReference>
<dbReference type="VEuPathDB" id="FungiDB:SPCC645.14c"/>
<dbReference type="eggNOG" id="KOG0548">
    <property type="taxonomic scope" value="Eukaryota"/>
</dbReference>
<dbReference type="HOGENOM" id="CLU_000134_46_5_1"/>
<dbReference type="InParanoid" id="Q9USI5"/>
<dbReference type="OMA" id="MYSAREN"/>
<dbReference type="PhylomeDB" id="Q9USI5"/>
<dbReference type="Reactome" id="R-SPO-3371497">
    <property type="pathway name" value="HSP90 chaperone cycle for steroid hormone receptors (SHR) in the presence of ligand"/>
</dbReference>
<dbReference type="Reactome" id="R-SPO-9696273">
    <property type="pathway name" value="RND1 GTPase cycle"/>
</dbReference>
<dbReference type="PRO" id="PR:Q9USI5"/>
<dbReference type="Proteomes" id="UP000002485">
    <property type="component" value="Chromosome III"/>
</dbReference>
<dbReference type="GO" id="GO:0005737">
    <property type="term" value="C:cytoplasm"/>
    <property type="evidence" value="ECO:0007005"/>
    <property type="project" value="PomBase"/>
</dbReference>
<dbReference type="GO" id="GO:0005829">
    <property type="term" value="C:cytosol"/>
    <property type="evidence" value="ECO:0007005"/>
    <property type="project" value="PomBase"/>
</dbReference>
<dbReference type="GO" id="GO:0005634">
    <property type="term" value="C:nucleus"/>
    <property type="evidence" value="ECO:0007005"/>
    <property type="project" value="PomBase"/>
</dbReference>
<dbReference type="GO" id="GO:0042030">
    <property type="term" value="F:ATPase inhibitor activity"/>
    <property type="evidence" value="ECO:0000314"/>
    <property type="project" value="PomBase"/>
</dbReference>
<dbReference type="GO" id="GO:0051879">
    <property type="term" value="F:Hsp90 protein binding"/>
    <property type="evidence" value="ECO:0000318"/>
    <property type="project" value="GO_Central"/>
</dbReference>
<dbReference type="GO" id="GO:0006457">
    <property type="term" value="P:protein folding"/>
    <property type="evidence" value="ECO:0000266"/>
    <property type="project" value="PomBase"/>
</dbReference>
<dbReference type="FunFam" id="1.10.260.100:FF:000004">
    <property type="entry name" value="Putative stress-induced-phosphoprotein 1"/>
    <property type="match status" value="1"/>
</dbReference>
<dbReference type="FunFam" id="1.25.40.10:FF:000010">
    <property type="entry name" value="Stress-induced phosphoprotein 1"/>
    <property type="match status" value="1"/>
</dbReference>
<dbReference type="FunFam" id="1.25.40.10:FF:000020">
    <property type="entry name" value="Stress-induced phosphoprotein 1"/>
    <property type="match status" value="1"/>
</dbReference>
<dbReference type="FunFam" id="1.10.260.100:FF:000002">
    <property type="entry name" value="Stress-induced-phosphoprotein 1 (Hsp70/Hsp90-organizing)"/>
    <property type="match status" value="1"/>
</dbReference>
<dbReference type="Gene3D" id="1.10.260.100">
    <property type="match status" value="2"/>
</dbReference>
<dbReference type="Gene3D" id="1.25.40.10">
    <property type="entry name" value="Tetratricopeptide repeat domain"/>
    <property type="match status" value="3"/>
</dbReference>
<dbReference type="InterPro" id="IPR041243">
    <property type="entry name" value="STI1/HOP_DP"/>
</dbReference>
<dbReference type="InterPro" id="IPR006636">
    <property type="entry name" value="STI1_HS-bd"/>
</dbReference>
<dbReference type="InterPro" id="IPR011990">
    <property type="entry name" value="TPR-like_helical_dom_sf"/>
</dbReference>
<dbReference type="InterPro" id="IPR019734">
    <property type="entry name" value="TPR_rpt"/>
</dbReference>
<dbReference type="PANTHER" id="PTHR22904:SF523">
    <property type="entry name" value="STRESS-INDUCED-PHOSPHOPROTEIN 1"/>
    <property type="match status" value="1"/>
</dbReference>
<dbReference type="PANTHER" id="PTHR22904">
    <property type="entry name" value="TPR REPEAT CONTAINING PROTEIN"/>
    <property type="match status" value="1"/>
</dbReference>
<dbReference type="Pfam" id="PF17830">
    <property type="entry name" value="STI1-HOP_DP"/>
    <property type="match status" value="2"/>
</dbReference>
<dbReference type="Pfam" id="PF13424">
    <property type="entry name" value="TPR_12"/>
    <property type="match status" value="1"/>
</dbReference>
<dbReference type="Pfam" id="PF13432">
    <property type="entry name" value="TPR_16"/>
    <property type="match status" value="1"/>
</dbReference>
<dbReference type="Pfam" id="PF13431">
    <property type="entry name" value="TPR_17"/>
    <property type="match status" value="1"/>
</dbReference>
<dbReference type="Pfam" id="PF13181">
    <property type="entry name" value="TPR_8"/>
    <property type="match status" value="1"/>
</dbReference>
<dbReference type="SMART" id="SM00727">
    <property type="entry name" value="STI1"/>
    <property type="match status" value="2"/>
</dbReference>
<dbReference type="SMART" id="SM00028">
    <property type="entry name" value="TPR"/>
    <property type="match status" value="8"/>
</dbReference>
<dbReference type="SUPFAM" id="SSF48452">
    <property type="entry name" value="TPR-like"/>
    <property type="match status" value="3"/>
</dbReference>
<dbReference type="PROSITE" id="PS50005">
    <property type="entry name" value="TPR"/>
    <property type="match status" value="8"/>
</dbReference>
<dbReference type="PROSITE" id="PS50293">
    <property type="entry name" value="TPR_REGION"/>
    <property type="match status" value="3"/>
</dbReference>
<name>STI1_SCHPO</name>
<feature type="chain" id="PRO_0000106342" description="Heat shock protein sti1 homolog">
    <location>
        <begin position="1"/>
        <end position="591"/>
    </location>
</feature>
<feature type="repeat" description="TPR 1">
    <location>
        <begin position="2"/>
        <end position="35"/>
    </location>
</feature>
<feature type="repeat" description="TPR 2">
    <location>
        <begin position="36"/>
        <end position="69"/>
    </location>
</feature>
<feature type="repeat" description="TPR 3">
    <location>
        <begin position="70"/>
        <end position="103"/>
    </location>
</feature>
<feature type="domain" description="STI1 1">
    <location>
        <begin position="139"/>
        <end position="178"/>
    </location>
</feature>
<feature type="repeat" description="TPR 4">
    <location>
        <begin position="265"/>
        <end position="298"/>
    </location>
</feature>
<feature type="repeat" description="TPR 5">
    <location>
        <begin position="299"/>
        <end position="331"/>
    </location>
</feature>
<feature type="repeat" description="TPR 6">
    <location>
        <begin position="339"/>
        <end position="372"/>
    </location>
</feature>
<feature type="repeat" description="TPR 7">
    <location>
        <begin position="399"/>
        <end position="432"/>
    </location>
</feature>
<feature type="repeat" description="TPR 8">
    <location>
        <begin position="433"/>
        <end position="466"/>
    </location>
</feature>
<feature type="repeat" description="TPR 9">
    <location>
        <begin position="467"/>
        <end position="500"/>
    </location>
</feature>
<feature type="domain" description="STI1 2">
    <location>
        <begin position="530"/>
        <end position="569"/>
    </location>
</feature>
<feature type="region of interest" description="Disordered" evidence="2">
    <location>
        <begin position="202"/>
        <end position="255"/>
    </location>
</feature>
<feature type="compositionally biased region" description="Low complexity" evidence="2">
    <location>
        <begin position="215"/>
        <end position="225"/>
    </location>
</feature>
<feature type="compositionally biased region" description="Basic and acidic residues" evidence="2">
    <location>
        <begin position="245"/>
        <end position="255"/>
    </location>
</feature>
<feature type="sequence conflict" description="In Ref. 1; BAA22619." evidence="3" ref="1">
    <original>A</original>
    <variation>T</variation>
    <location>
        <position position="28"/>
    </location>
</feature>
<comment type="function">
    <text evidence="1">May play a role in mediating the heat shock response of some HSP70 genes.</text>
</comment>
<comment type="subunit">
    <text evidence="1">Part of a larger complex that includes HSP70, HSP90, and immunophilins.</text>
</comment>
<comment type="subcellular location">
    <subcellularLocation>
        <location evidence="1">Cytoplasm</location>
    </subcellularLocation>
</comment>
<organism>
    <name type="scientific">Schizosaccharomyces pombe (strain 972 / ATCC 24843)</name>
    <name type="common">Fission yeast</name>
    <dbReference type="NCBI Taxonomy" id="284812"/>
    <lineage>
        <taxon>Eukaryota</taxon>
        <taxon>Fungi</taxon>
        <taxon>Dikarya</taxon>
        <taxon>Ascomycota</taxon>
        <taxon>Taphrinomycotina</taxon>
        <taxon>Schizosaccharomycetes</taxon>
        <taxon>Schizosaccharomycetales</taxon>
        <taxon>Schizosaccharomycetaceae</taxon>
        <taxon>Schizosaccharomyces</taxon>
    </lineage>
</organism>
<reference key="1">
    <citation type="submission" date="1996-05" db="EMBL/GenBank/DDBJ databases">
        <authorList>
            <person name="Yamashita Y."/>
            <person name="Nakaseko Y."/>
            <person name="Samejima I."/>
            <person name="Kumada K."/>
            <person name="Yamada H."/>
            <person name="Yanagida M."/>
        </authorList>
    </citation>
    <scope>NUCLEOTIDE SEQUENCE [GENOMIC DNA]</scope>
</reference>
<reference key="2">
    <citation type="journal article" date="2002" name="Nature">
        <title>The genome sequence of Schizosaccharomyces pombe.</title>
        <authorList>
            <person name="Wood V."/>
            <person name="Gwilliam R."/>
            <person name="Rajandream M.A."/>
            <person name="Lyne M.H."/>
            <person name="Lyne R."/>
            <person name="Stewart A."/>
            <person name="Sgouros J.G."/>
            <person name="Peat N."/>
            <person name="Hayles J."/>
            <person name="Baker S.G."/>
            <person name="Basham D."/>
            <person name="Bowman S."/>
            <person name="Brooks K."/>
            <person name="Brown D."/>
            <person name="Brown S."/>
            <person name="Chillingworth T."/>
            <person name="Churcher C.M."/>
            <person name="Collins M."/>
            <person name="Connor R."/>
            <person name="Cronin A."/>
            <person name="Davis P."/>
            <person name="Feltwell T."/>
            <person name="Fraser A."/>
            <person name="Gentles S."/>
            <person name="Goble A."/>
            <person name="Hamlin N."/>
            <person name="Harris D.E."/>
            <person name="Hidalgo J."/>
            <person name="Hodgson G."/>
            <person name="Holroyd S."/>
            <person name="Hornsby T."/>
            <person name="Howarth S."/>
            <person name="Huckle E.J."/>
            <person name="Hunt S."/>
            <person name="Jagels K."/>
            <person name="James K.D."/>
            <person name="Jones L."/>
            <person name="Jones M."/>
            <person name="Leather S."/>
            <person name="McDonald S."/>
            <person name="McLean J."/>
            <person name="Mooney P."/>
            <person name="Moule S."/>
            <person name="Mungall K.L."/>
            <person name="Murphy L.D."/>
            <person name="Niblett D."/>
            <person name="Odell C."/>
            <person name="Oliver K."/>
            <person name="O'Neil S."/>
            <person name="Pearson D."/>
            <person name="Quail M.A."/>
            <person name="Rabbinowitsch E."/>
            <person name="Rutherford K.M."/>
            <person name="Rutter S."/>
            <person name="Saunders D."/>
            <person name="Seeger K."/>
            <person name="Sharp S."/>
            <person name="Skelton J."/>
            <person name="Simmonds M.N."/>
            <person name="Squares R."/>
            <person name="Squares S."/>
            <person name="Stevens K."/>
            <person name="Taylor K."/>
            <person name="Taylor R.G."/>
            <person name="Tivey A."/>
            <person name="Walsh S.V."/>
            <person name="Warren T."/>
            <person name="Whitehead S."/>
            <person name="Woodward J.R."/>
            <person name="Volckaert G."/>
            <person name="Aert R."/>
            <person name="Robben J."/>
            <person name="Grymonprez B."/>
            <person name="Weltjens I."/>
            <person name="Vanstreels E."/>
            <person name="Rieger M."/>
            <person name="Schaefer M."/>
            <person name="Mueller-Auer S."/>
            <person name="Gabel C."/>
            <person name="Fuchs M."/>
            <person name="Duesterhoeft A."/>
            <person name="Fritzc C."/>
            <person name="Holzer E."/>
            <person name="Moestl D."/>
            <person name="Hilbert H."/>
            <person name="Borzym K."/>
            <person name="Langer I."/>
            <person name="Beck A."/>
            <person name="Lehrach H."/>
            <person name="Reinhardt R."/>
            <person name="Pohl T.M."/>
            <person name="Eger P."/>
            <person name="Zimmermann W."/>
            <person name="Wedler H."/>
            <person name="Wambutt R."/>
            <person name="Purnelle B."/>
            <person name="Goffeau A."/>
            <person name="Cadieu E."/>
            <person name="Dreano S."/>
            <person name="Gloux S."/>
            <person name="Lelaure V."/>
            <person name="Mottier S."/>
            <person name="Galibert F."/>
            <person name="Aves S.J."/>
            <person name="Xiang Z."/>
            <person name="Hunt C."/>
            <person name="Moore K."/>
            <person name="Hurst S.M."/>
            <person name="Lucas M."/>
            <person name="Rochet M."/>
            <person name="Gaillardin C."/>
            <person name="Tallada V.A."/>
            <person name="Garzon A."/>
            <person name="Thode G."/>
            <person name="Daga R.R."/>
            <person name="Cruzado L."/>
            <person name="Jimenez J."/>
            <person name="Sanchez M."/>
            <person name="del Rey F."/>
            <person name="Benito J."/>
            <person name="Dominguez A."/>
            <person name="Revuelta J.L."/>
            <person name="Moreno S."/>
            <person name="Armstrong J."/>
            <person name="Forsburg S.L."/>
            <person name="Cerutti L."/>
            <person name="Lowe T."/>
            <person name="McCombie W.R."/>
            <person name="Paulsen I."/>
            <person name="Potashkin J."/>
            <person name="Shpakovski G.V."/>
            <person name="Ussery D."/>
            <person name="Barrell B.G."/>
            <person name="Nurse P."/>
        </authorList>
    </citation>
    <scope>NUCLEOTIDE SEQUENCE [LARGE SCALE GENOMIC DNA]</scope>
    <source>
        <strain>972 / ATCC 24843</strain>
    </source>
</reference>
<accession>Q9USI5</accession>
<accession>O13458</accession>